<feature type="chain" id="PRO_1000148029" description="Adenosylcobinamide-GDP ribazoletransferase">
    <location>
        <begin position="1"/>
        <end position="249"/>
    </location>
</feature>
<feature type="transmembrane region" description="Helical" evidence="1">
    <location>
        <begin position="32"/>
        <end position="52"/>
    </location>
</feature>
<feature type="transmembrane region" description="Helical" evidence="1">
    <location>
        <begin position="109"/>
        <end position="129"/>
    </location>
</feature>
<feature type="transmembrane region" description="Helical" evidence="1">
    <location>
        <begin position="132"/>
        <end position="152"/>
    </location>
</feature>
<feature type="transmembrane region" description="Helical" evidence="1">
    <location>
        <begin position="173"/>
        <end position="193"/>
    </location>
</feature>
<feature type="transmembrane region" description="Helical" evidence="1">
    <location>
        <begin position="198"/>
        <end position="218"/>
    </location>
</feature>
<organism>
    <name type="scientific">Mycobacterium bovis (strain BCG / Tokyo 172 / ATCC 35737 / TMC 1019)</name>
    <dbReference type="NCBI Taxonomy" id="561275"/>
    <lineage>
        <taxon>Bacteria</taxon>
        <taxon>Bacillati</taxon>
        <taxon>Actinomycetota</taxon>
        <taxon>Actinomycetes</taxon>
        <taxon>Mycobacteriales</taxon>
        <taxon>Mycobacteriaceae</taxon>
        <taxon>Mycobacterium</taxon>
        <taxon>Mycobacterium tuberculosis complex</taxon>
    </lineage>
</organism>
<gene>
    <name evidence="1" type="primary">cobS</name>
    <name type="ordered locus">JTY_2218</name>
</gene>
<accession>C1AQC3</accession>
<proteinExistence type="inferred from homology"/>
<reference key="1">
    <citation type="journal article" date="2009" name="Vaccine">
        <title>Whole genome sequence analysis of Mycobacterium bovis bacillus Calmette-Guerin (BCG) Tokyo 172: a comparative study of BCG vaccine substrains.</title>
        <authorList>
            <person name="Seki M."/>
            <person name="Honda I."/>
            <person name="Fujita I."/>
            <person name="Yano I."/>
            <person name="Yamamoto S."/>
            <person name="Koyama A."/>
        </authorList>
    </citation>
    <scope>NUCLEOTIDE SEQUENCE [LARGE SCALE GENOMIC DNA]</scope>
    <source>
        <strain>BCG / Tokyo 172 / ATCC 35737 / TMC 1019</strain>
    </source>
</reference>
<keyword id="KW-1003">Cell membrane</keyword>
<keyword id="KW-0169">Cobalamin biosynthesis</keyword>
<keyword id="KW-0460">Magnesium</keyword>
<keyword id="KW-0472">Membrane</keyword>
<keyword id="KW-0808">Transferase</keyword>
<keyword id="KW-0812">Transmembrane</keyword>
<keyword id="KW-1133">Transmembrane helix</keyword>
<protein>
    <recommendedName>
        <fullName evidence="1">Adenosylcobinamide-GDP ribazoletransferase</fullName>
        <ecNumber evidence="1">2.7.8.26</ecNumber>
    </recommendedName>
    <alternativeName>
        <fullName evidence="1">Cobalamin synthase</fullName>
    </alternativeName>
    <alternativeName>
        <fullName evidence="1">Cobalamin-5'-phosphate synthase</fullName>
    </alternativeName>
</protein>
<dbReference type="EC" id="2.7.8.26" evidence="1"/>
<dbReference type="EMBL" id="AP010918">
    <property type="protein sequence ID" value="BAH26502.1"/>
    <property type="molecule type" value="Genomic_DNA"/>
</dbReference>
<dbReference type="RefSeq" id="WP_003411433.1">
    <property type="nucleotide sequence ID" value="NZ_CP014566.1"/>
</dbReference>
<dbReference type="KEGG" id="mbt:JTY_2218"/>
<dbReference type="HOGENOM" id="CLU_057426_0_2_11"/>
<dbReference type="UniPathway" id="UPA00148">
    <property type="reaction ID" value="UER00238"/>
</dbReference>
<dbReference type="GO" id="GO:0005886">
    <property type="term" value="C:plasma membrane"/>
    <property type="evidence" value="ECO:0007669"/>
    <property type="project" value="UniProtKB-SubCell"/>
</dbReference>
<dbReference type="GO" id="GO:0051073">
    <property type="term" value="F:adenosylcobinamide-GDP ribazoletransferase activity"/>
    <property type="evidence" value="ECO:0007669"/>
    <property type="project" value="UniProtKB-UniRule"/>
</dbReference>
<dbReference type="GO" id="GO:0008818">
    <property type="term" value="F:cobalamin 5'-phosphate synthase activity"/>
    <property type="evidence" value="ECO:0007669"/>
    <property type="project" value="UniProtKB-UniRule"/>
</dbReference>
<dbReference type="GO" id="GO:0009236">
    <property type="term" value="P:cobalamin biosynthetic process"/>
    <property type="evidence" value="ECO:0007669"/>
    <property type="project" value="UniProtKB-UniRule"/>
</dbReference>
<dbReference type="HAMAP" id="MF_00719">
    <property type="entry name" value="CobS"/>
    <property type="match status" value="1"/>
</dbReference>
<dbReference type="InterPro" id="IPR003805">
    <property type="entry name" value="CobS"/>
</dbReference>
<dbReference type="NCBIfam" id="NF001279">
    <property type="entry name" value="PRK00235.2-1"/>
    <property type="match status" value="1"/>
</dbReference>
<dbReference type="PANTHER" id="PTHR34148">
    <property type="entry name" value="ADENOSYLCOBINAMIDE-GDP RIBAZOLETRANSFERASE"/>
    <property type="match status" value="1"/>
</dbReference>
<dbReference type="PANTHER" id="PTHR34148:SF1">
    <property type="entry name" value="ADENOSYLCOBINAMIDE-GDP RIBAZOLETRANSFERASE"/>
    <property type="match status" value="1"/>
</dbReference>
<dbReference type="Pfam" id="PF02654">
    <property type="entry name" value="CobS"/>
    <property type="match status" value="1"/>
</dbReference>
<comment type="function">
    <text evidence="1">Joins adenosylcobinamide-GDP and alpha-ribazole to generate adenosylcobalamin (Ado-cobalamin). Also synthesizes adenosylcobalamin 5'-phosphate from adenosylcobinamide-GDP and alpha-ribazole 5'-phosphate.</text>
</comment>
<comment type="catalytic activity">
    <reaction evidence="1">
        <text>alpha-ribazole + adenosylcob(III)inamide-GDP = adenosylcob(III)alamin + GMP + H(+)</text>
        <dbReference type="Rhea" id="RHEA:16049"/>
        <dbReference type="ChEBI" id="CHEBI:10329"/>
        <dbReference type="ChEBI" id="CHEBI:15378"/>
        <dbReference type="ChEBI" id="CHEBI:18408"/>
        <dbReference type="ChEBI" id="CHEBI:58115"/>
        <dbReference type="ChEBI" id="CHEBI:60487"/>
        <dbReference type="EC" id="2.7.8.26"/>
    </reaction>
</comment>
<comment type="catalytic activity">
    <reaction evidence="1">
        <text>alpha-ribazole 5'-phosphate + adenosylcob(III)inamide-GDP = adenosylcob(III)alamin 5'-phosphate + GMP + H(+)</text>
        <dbReference type="Rhea" id="RHEA:23560"/>
        <dbReference type="ChEBI" id="CHEBI:15378"/>
        <dbReference type="ChEBI" id="CHEBI:57918"/>
        <dbReference type="ChEBI" id="CHEBI:58115"/>
        <dbReference type="ChEBI" id="CHEBI:60487"/>
        <dbReference type="ChEBI" id="CHEBI:60493"/>
        <dbReference type="EC" id="2.7.8.26"/>
    </reaction>
</comment>
<comment type="cofactor">
    <cofactor evidence="1">
        <name>Mg(2+)</name>
        <dbReference type="ChEBI" id="CHEBI:18420"/>
    </cofactor>
</comment>
<comment type="pathway">
    <text evidence="1">Cofactor biosynthesis; adenosylcobalamin biosynthesis; adenosylcobalamin from cob(II)yrinate a,c-diamide: step 7/7.</text>
</comment>
<comment type="subcellular location">
    <subcellularLocation>
        <location evidence="1">Cell membrane</location>
        <topology evidence="1">Multi-pass membrane protein</topology>
    </subcellularLocation>
</comment>
<comment type="similarity">
    <text evidence="1">Belongs to the CobS family.</text>
</comment>
<sequence length="249" mass="24320">MMRSLATAFAFATVIPTPGSATTPMGRGPMTALPVVGAALGALAAAIAWAGAQVFGPSSPLSGMLTVAVLLVVTRGLHIDGVADTADGLGCYGPPQRALAVMRDGSTGPFGVAAVVLVIALQGLAFATLTTVGIAGITLAVLSGRVTAVLVCRRSVPAAHGSTLGSRVAGTQPAPVVAAWLAVLLAVSVPAGPRPWQGPIAVLVAVTAGAALAAHCVHRFGGVTGDVLGSAIELSTTVSAVTLAGLARL</sequence>
<name>COBS_MYCBT</name>
<evidence type="ECO:0000255" key="1">
    <source>
        <dbReference type="HAMAP-Rule" id="MF_00719"/>
    </source>
</evidence>